<organism>
    <name type="scientific">Arabidopsis thaliana</name>
    <name type="common">Mouse-ear cress</name>
    <dbReference type="NCBI Taxonomy" id="3702"/>
    <lineage>
        <taxon>Eukaryota</taxon>
        <taxon>Viridiplantae</taxon>
        <taxon>Streptophyta</taxon>
        <taxon>Embryophyta</taxon>
        <taxon>Tracheophyta</taxon>
        <taxon>Spermatophyta</taxon>
        <taxon>Magnoliopsida</taxon>
        <taxon>eudicotyledons</taxon>
        <taxon>Gunneridae</taxon>
        <taxon>Pentapetalae</taxon>
        <taxon>rosids</taxon>
        <taxon>malvids</taxon>
        <taxon>Brassicales</taxon>
        <taxon>Brassicaceae</taxon>
        <taxon>Camelineae</taxon>
        <taxon>Arabidopsis</taxon>
    </lineage>
</organism>
<evidence type="ECO:0000250" key="1"/>
<evidence type="ECO:0000250" key="2">
    <source>
        <dbReference type="UniProtKB" id="Q8H1S0"/>
    </source>
</evidence>
<evidence type="ECO:0000269" key="3">
    <source>
    </source>
</evidence>
<evidence type="ECO:0000305" key="4"/>
<gene>
    <name type="primary">MIOX5</name>
    <name type="ordered locus">At5g56640</name>
    <name type="ORF">MIK19.9</name>
</gene>
<dbReference type="EC" id="1.13.99.1" evidence="2"/>
<dbReference type="EMBL" id="AB013392">
    <property type="protein sequence ID" value="BAB09882.1"/>
    <property type="molecule type" value="Genomic_DNA"/>
</dbReference>
<dbReference type="EMBL" id="CP002688">
    <property type="protein sequence ID" value="AED96791.1"/>
    <property type="molecule type" value="Genomic_DNA"/>
</dbReference>
<dbReference type="EMBL" id="AY084627">
    <property type="protein sequence ID" value="AAM61190.1"/>
    <property type="molecule type" value="mRNA"/>
</dbReference>
<dbReference type="RefSeq" id="NP_200475.1">
    <property type="nucleotide sequence ID" value="NM_125047.3"/>
</dbReference>
<dbReference type="SMR" id="Q9FJU4"/>
<dbReference type="FunCoup" id="Q9FJU4">
    <property type="interactions" value="281"/>
</dbReference>
<dbReference type="STRING" id="3702.Q9FJU4"/>
<dbReference type="iPTMnet" id="Q9FJU4"/>
<dbReference type="PaxDb" id="3702-AT5G56640.1"/>
<dbReference type="ProteomicsDB" id="237030"/>
<dbReference type="EnsemblPlants" id="AT5G56640.1">
    <property type="protein sequence ID" value="AT5G56640.1"/>
    <property type="gene ID" value="AT5G56640"/>
</dbReference>
<dbReference type="GeneID" id="835765"/>
<dbReference type="Gramene" id="AT5G56640.1">
    <property type="protein sequence ID" value="AT5G56640.1"/>
    <property type="gene ID" value="AT5G56640"/>
</dbReference>
<dbReference type="KEGG" id="ath:AT5G56640"/>
<dbReference type="Araport" id="AT5G56640"/>
<dbReference type="TAIR" id="AT5G56640">
    <property type="gene designation" value="MIOX5"/>
</dbReference>
<dbReference type="eggNOG" id="KOG1573">
    <property type="taxonomic scope" value="Eukaryota"/>
</dbReference>
<dbReference type="HOGENOM" id="CLU_050259_2_0_1"/>
<dbReference type="InParanoid" id="Q9FJU4"/>
<dbReference type="PhylomeDB" id="Q9FJU4"/>
<dbReference type="BioCyc" id="ARA:AT5G56640-MONOMER"/>
<dbReference type="BRENDA" id="1.13.99.1">
    <property type="organism ID" value="399"/>
</dbReference>
<dbReference type="UniPathway" id="UPA00111">
    <property type="reaction ID" value="UER00527"/>
</dbReference>
<dbReference type="PRO" id="PR:Q9FJU4"/>
<dbReference type="Proteomes" id="UP000006548">
    <property type="component" value="Chromosome 5"/>
</dbReference>
<dbReference type="ExpressionAtlas" id="Q9FJU4">
    <property type="expression patterns" value="baseline and differential"/>
</dbReference>
<dbReference type="GO" id="GO:0005737">
    <property type="term" value="C:cytoplasm"/>
    <property type="evidence" value="ECO:0007669"/>
    <property type="project" value="UniProtKB-SubCell"/>
</dbReference>
<dbReference type="GO" id="GO:0050113">
    <property type="term" value="F:inositol oxygenase activity"/>
    <property type="evidence" value="ECO:0007669"/>
    <property type="project" value="UniProtKB-EC"/>
</dbReference>
<dbReference type="GO" id="GO:0005506">
    <property type="term" value="F:iron ion binding"/>
    <property type="evidence" value="ECO:0007669"/>
    <property type="project" value="InterPro"/>
</dbReference>
<dbReference type="GO" id="GO:0019310">
    <property type="term" value="P:inositol catabolic process"/>
    <property type="evidence" value="ECO:0007669"/>
    <property type="project" value="InterPro"/>
</dbReference>
<dbReference type="GO" id="GO:0019853">
    <property type="term" value="P:L-ascorbic acid biosynthetic process"/>
    <property type="evidence" value="ECO:0007669"/>
    <property type="project" value="UniProtKB-KW"/>
</dbReference>
<dbReference type="InterPro" id="IPR007828">
    <property type="entry name" value="Inositol_oxygenase"/>
</dbReference>
<dbReference type="PANTHER" id="PTHR12588:SF20">
    <property type="entry name" value="INOSITOL OXYGENASE 5"/>
    <property type="match status" value="1"/>
</dbReference>
<dbReference type="PANTHER" id="PTHR12588">
    <property type="entry name" value="MYOINOSITOL OXYGENASE"/>
    <property type="match status" value="1"/>
</dbReference>
<dbReference type="Pfam" id="PF05153">
    <property type="entry name" value="MIOX"/>
    <property type="match status" value="1"/>
</dbReference>
<dbReference type="SUPFAM" id="SSF109604">
    <property type="entry name" value="HD-domain/PDEase-like"/>
    <property type="match status" value="1"/>
</dbReference>
<sequence length="314" mass="36544">MNISVENPVFVHEDSTTQKTGELRLDSDIPMSKISSDDEVFLAPEMNAFGRQFRDYTDTNSERQKSVEHFYATQHTNQTLDFVQKMRSEYGKLDKMVMNIWECCELSKEVVDESDPDLDEPQIQHLLQSAEAIRKDYPNEDWLHLTALIHDLGKVLTLPQFGGLPQWAVVGDTFPVGCAFDESNVHHKYFMENPDFNNPKYNTKAGIYSEGCGLENVLMSWGHDDYMYLVAKENGSTLPSPGLFIIRYHSFYPLHKAGAYTHLMNEEDKENLKWLHVFNKYDLYSKSKVHVNVEKVKPYYMSLIKKYFPENLRW</sequence>
<proteinExistence type="evidence at transcript level"/>
<keyword id="KW-0060">Ascorbate biosynthesis</keyword>
<keyword id="KW-0963">Cytoplasm</keyword>
<keyword id="KW-0408">Iron</keyword>
<keyword id="KW-0479">Metal-binding</keyword>
<keyword id="KW-0560">Oxidoreductase</keyword>
<keyword id="KW-1185">Reference proteome</keyword>
<reference key="1">
    <citation type="journal article" date="2005" name="Planta">
        <title>The inositol oxygenase gene family of Arabidopsis is involved in the biosynthesis of nucleotide sugar precursors for cell-wall matrix polysaccharides.</title>
        <authorList>
            <person name="Kanter U."/>
            <person name="Usadel B."/>
            <person name="Guerineau F."/>
            <person name="Li Y."/>
            <person name="Pauly M."/>
            <person name="Tenhaken R."/>
        </authorList>
    </citation>
    <scope>NUCLEOTIDE SEQUENCE [MRNA]</scope>
    <scope>TISSUE SPECIFICITY</scope>
</reference>
<reference key="2">
    <citation type="journal article" date="1998" name="DNA Res.">
        <title>Structural analysis of Arabidopsis thaliana chromosome 5. VI. Sequence features of the regions of 1,367,185 bp covered by 19 physically assigned P1 and TAC clones.</title>
        <authorList>
            <person name="Kotani H."/>
            <person name="Nakamura Y."/>
            <person name="Sato S."/>
            <person name="Asamizu E."/>
            <person name="Kaneko T."/>
            <person name="Miyajima N."/>
            <person name="Tabata S."/>
        </authorList>
    </citation>
    <scope>NUCLEOTIDE SEQUENCE [LARGE SCALE GENOMIC DNA]</scope>
    <source>
        <strain>cv. Columbia</strain>
    </source>
</reference>
<reference key="3">
    <citation type="journal article" date="2017" name="Plant J.">
        <title>Araport11: a complete reannotation of the Arabidopsis thaliana reference genome.</title>
        <authorList>
            <person name="Cheng C.Y."/>
            <person name="Krishnakumar V."/>
            <person name="Chan A.P."/>
            <person name="Thibaud-Nissen F."/>
            <person name="Schobel S."/>
            <person name="Town C.D."/>
        </authorList>
    </citation>
    <scope>GENOME REANNOTATION</scope>
    <source>
        <strain>cv. Columbia</strain>
    </source>
</reference>
<reference key="4">
    <citation type="submission" date="2002-03" db="EMBL/GenBank/DDBJ databases">
        <title>Full-length cDNA from Arabidopsis thaliana.</title>
        <authorList>
            <person name="Brover V.V."/>
            <person name="Troukhan M.E."/>
            <person name="Alexandrov N.A."/>
            <person name="Lu Y.-P."/>
            <person name="Flavell R.B."/>
            <person name="Feldmann K.A."/>
        </authorList>
    </citation>
    <scope>NUCLEOTIDE SEQUENCE [LARGE SCALE MRNA]</scope>
</reference>
<protein>
    <recommendedName>
        <fullName>Inositol oxygenase 5</fullName>
        <ecNumber evidence="2">1.13.99.1</ecNumber>
    </recommendedName>
    <alternativeName>
        <fullName>Myo-inositol oxygenase 5</fullName>
        <shortName>AtMIOX5</shortName>
        <shortName>MI oxygenase 5</shortName>
    </alternativeName>
</protein>
<accession>Q9FJU4</accession>
<accession>Q8LFV4</accession>
<comment type="function">
    <text evidence="2">Involved in the biosynthesis of UDP-glucuronic acid (UDP-GlcA), providing nucleotide sugars for cell-wall polymers. May be also involved in plant ascorbate biosynthesis.</text>
</comment>
<comment type="catalytic activity">
    <reaction evidence="2">
        <text>myo-inositol + O2 = D-glucuronate + H2O + H(+)</text>
        <dbReference type="Rhea" id="RHEA:23696"/>
        <dbReference type="ChEBI" id="CHEBI:15377"/>
        <dbReference type="ChEBI" id="CHEBI:15378"/>
        <dbReference type="ChEBI" id="CHEBI:15379"/>
        <dbReference type="ChEBI" id="CHEBI:17268"/>
        <dbReference type="ChEBI" id="CHEBI:58720"/>
        <dbReference type="EC" id="1.13.99.1"/>
    </reaction>
</comment>
<comment type="cofactor">
    <cofactor evidence="1">
        <name>Fe cation</name>
        <dbReference type="ChEBI" id="CHEBI:24875"/>
    </cofactor>
    <text evidence="1">Binds 2 iron ions per subunit.</text>
</comment>
<comment type="pathway">
    <text>Polyol metabolism; myo-inositol degradation into D-glucuronate; D-glucuronate from myo-inositol: step 1/1.</text>
</comment>
<comment type="subcellular location">
    <subcellularLocation>
        <location evidence="4">Cytoplasm</location>
    </subcellularLocation>
</comment>
<comment type="tissue specificity">
    <text evidence="3">Expressed in flowers and siliques.</text>
</comment>
<comment type="similarity">
    <text evidence="4">Belongs to the myo-inositol oxygenase family.</text>
</comment>
<name>MIOX5_ARATH</name>
<feature type="chain" id="PRO_0000079157" description="Inositol oxygenase 5">
    <location>
        <begin position="1"/>
        <end position="314"/>
    </location>
</feature>
<feature type="binding site" evidence="1">
    <location>
        <position position="54"/>
    </location>
    <ligand>
        <name>substrate</name>
    </ligand>
</feature>
<feature type="binding site" evidence="1">
    <location>
        <begin position="112"/>
        <end position="114"/>
    </location>
    <ligand>
        <name>substrate</name>
    </ligand>
</feature>
<feature type="binding site" evidence="1">
    <location>
        <position position="125"/>
    </location>
    <ligand>
        <name>Fe cation</name>
        <dbReference type="ChEBI" id="CHEBI:24875"/>
        <label>1</label>
    </ligand>
</feature>
<feature type="binding site" evidence="1">
    <location>
        <position position="150"/>
    </location>
    <ligand>
        <name>Fe cation</name>
        <dbReference type="ChEBI" id="CHEBI:24875"/>
        <label>1</label>
    </ligand>
</feature>
<feature type="binding site" evidence="1">
    <location>
        <position position="151"/>
    </location>
    <ligand>
        <name>Fe cation</name>
        <dbReference type="ChEBI" id="CHEBI:24875"/>
        <label>1</label>
    </ligand>
</feature>
<feature type="binding site" evidence="1">
    <location>
        <position position="151"/>
    </location>
    <ligand>
        <name>Fe cation</name>
        <dbReference type="ChEBI" id="CHEBI:24875"/>
        <label>2</label>
    </ligand>
</feature>
<feature type="binding site" evidence="1">
    <location>
        <position position="154"/>
    </location>
    <ligand>
        <name>substrate</name>
    </ligand>
</feature>
<feature type="binding site" evidence="1">
    <location>
        <begin position="171"/>
        <end position="172"/>
    </location>
    <ligand>
        <name>substrate</name>
    </ligand>
</feature>
<feature type="binding site" evidence="1">
    <location>
        <position position="223"/>
    </location>
    <ligand>
        <name>Fe cation</name>
        <dbReference type="ChEBI" id="CHEBI:24875"/>
        <label>2</label>
    </ligand>
</feature>
<feature type="binding site" evidence="1">
    <location>
        <begin position="249"/>
        <end position="250"/>
    </location>
    <ligand>
        <name>substrate</name>
    </ligand>
</feature>
<feature type="binding site" evidence="1">
    <location>
        <position position="249"/>
    </location>
    <ligand>
        <name>Fe cation</name>
        <dbReference type="ChEBI" id="CHEBI:24875"/>
        <label>2</label>
    </ligand>
</feature>
<feature type="binding site" evidence="1">
    <location>
        <position position="282"/>
    </location>
    <ligand>
        <name>Fe cation</name>
        <dbReference type="ChEBI" id="CHEBI:24875"/>
        <label>1</label>
    </ligand>
</feature>
<feature type="sequence conflict" description="In Ref. 4; AAM61190." evidence="4" ref="4">
    <original>S</original>
    <variation>L</variation>
    <location>
        <position position="107"/>
    </location>
</feature>